<proteinExistence type="evidence at protein level"/>
<reference key="1">
    <citation type="journal article" date="2004" name="Nat. Genet.">
        <title>Complete sequencing and characterization of 21,243 full-length human cDNAs.</title>
        <authorList>
            <person name="Ota T."/>
            <person name="Suzuki Y."/>
            <person name="Nishikawa T."/>
            <person name="Otsuki T."/>
            <person name="Sugiyama T."/>
            <person name="Irie R."/>
            <person name="Wakamatsu A."/>
            <person name="Hayashi K."/>
            <person name="Sato H."/>
            <person name="Nagai K."/>
            <person name="Kimura K."/>
            <person name="Makita H."/>
            <person name="Sekine M."/>
            <person name="Obayashi M."/>
            <person name="Nishi T."/>
            <person name="Shibahara T."/>
            <person name="Tanaka T."/>
            <person name="Ishii S."/>
            <person name="Yamamoto J."/>
            <person name="Saito K."/>
            <person name="Kawai Y."/>
            <person name="Isono Y."/>
            <person name="Nakamura Y."/>
            <person name="Nagahari K."/>
            <person name="Murakami K."/>
            <person name="Yasuda T."/>
            <person name="Iwayanagi T."/>
            <person name="Wagatsuma M."/>
            <person name="Shiratori A."/>
            <person name="Sudo H."/>
            <person name="Hosoiri T."/>
            <person name="Kaku Y."/>
            <person name="Kodaira H."/>
            <person name="Kondo H."/>
            <person name="Sugawara M."/>
            <person name="Takahashi M."/>
            <person name="Kanda K."/>
            <person name="Yokoi T."/>
            <person name="Furuya T."/>
            <person name="Kikkawa E."/>
            <person name="Omura Y."/>
            <person name="Abe K."/>
            <person name="Kamihara K."/>
            <person name="Katsuta N."/>
            <person name="Sato K."/>
            <person name="Tanikawa M."/>
            <person name="Yamazaki M."/>
            <person name="Ninomiya K."/>
            <person name="Ishibashi T."/>
            <person name="Yamashita H."/>
            <person name="Murakawa K."/>
            <person name="Fujimori K."/>
            <person name="Tanai H."/>
            <person name="Kimata M."/>
            <person name="Watanabe M."/>
            <person name="Hiraoka S."/>
            <person name="Chiba Y."/>
            <person name="Ishida S."/>
            <person name="Ono Y."/>
            <person name="Takiguchi S."/>
            <person name="Watanabe S."/>
            <person name="Yosida M."/>
            <person name="Hotuta T."/>
            <person name="Kusano J."/>
            <person name="Kanehori K."/>
            <person name="Takahashi-Fujii A."/>
            <person name="Hara H."/>
            <person name="Tanase T.-O."/>
            <person name="Nomura Y."/>
            <person name="Togiya S."/>
            <person name="Komai F."/>
            <person name="Hara R."/>
            <person name="Takeuchi K."/>
            <person name="Arita M."/>
            <person name="Imose N."/>
            <person name="Musashino K."/>
            <person name="Yuuki H."/>
            <person name="Oshima A."/>
            <person name="Sasaki N."/>
            <person name="Aotsuka S."/>
            <person name="Yoshikawa Y."/>
            <person name="Matsunawa H."/>
            <person name="Ichihara T."/>
            <person name="Shiohata N."/>
            <person name="Sano S."/>
            <person name="Moriya S."/>
            <person name="Momiyama H."/>
            <person name="Satoh N."/>
            <person name="Takami S."/>
            <person name="Terashima Y."/>
            <person name="Suzuki O."/>
            <person name="Nakagawa S."/>
            <person name="Senoh A."/>
            <person name="Mizoguchi H."/>
            <person name="Goto Y."/>
            <person name="Shimizu F."/>
            <person name="Wakebe H."/>
            <person name="Hishigaki H."/>
            <person name="Watanabe T."/>
            <person name="Sugiyama A."/>
            <person name="Takemoto M."/>
            <person name="Kawakami B."/>
            <person name="Yamazaki M."/>
            <person name="Watanabe K."/>
            <person name="Kumagai A."/>
            <person name="Itakura S."/>
            <person name="Fukuzumi Y."/>
            <person name="Fujimori Y."/>
            <person name="Komiyama M."/>
            <person name="Tashiro H."/>
            <person name="Tanigami A."/>
            <person name="Fujiwara T."/>
            <person name="Ono T."/>
            <person name="Yamada K."/>
            <person name="Fujii Y."/>
            <person name="Ozaki K."/>
            <person name="Hirao M."/>
            <person name="Ohmori Y."/>
            <person name="Kawabata A."/>
            <person name="Hikiji T."/>
            <person name="Kobatake N."/>
            <person name="Inagaki H."/>
            <person name="Ikema Y."/>
            <person name="Okamoto S."/>
            <person name="Okitani R."/>
            <person name="Kawakami T."/>
            <person name="Noguchi S."/>
            <person name="Itoh T."/>
            <person name="Shigeta K."/>
            <person name="Senba T."/>
            <person name="Matsumura K."/>
            <person name="Nakajima Y."/>
            <person name="Mizuno T."/>
            <person name="Morinaga M."/>
            <person name="Sasaki M."/>
            <person name="Togashi T."/>
            <person name="Oyama M."/>
            <person name="Hata H."/>
            <person name="Watanabe M."/>
            <person name="Komatsu T."/>
            <person name="Mizushima-Sugano J."/>
            <person name="Satoh T."/>
            <person name="Shirai Y."/>
            <person name="Takahashi Y."/>
            <person name="Nakagawa K."/>
            <person name="Okumura K."/>
            <person name="Nagase T."/>
            <person name="Nomura N."/>
            <person name="Kikuchi H."/>
            <person name="Masuho Y."/>
            <person name="Yamashita R."/>
            <person name="Nakai K."/>
            <person name="Yada T."/>
            <person name="Nakamura Y."/>
            <person name="Ohara O."/>
            <person name="Isogai T."/>
            <person name="Sugano S."/>
        </authorList>
    </citation>
    <scope>NUCLEOTIDE SEQUENCE [LARGE SCALE MRNA]</scope>
    <source>
        <tissue>Placenta</tissue>
    </source>
</reference>
<reference key="2">
    <citation type="journal article" date="2006" name="Nature">
        <title>DNA sequence and analysis of human chromosome 8.</title>
        <authorList>
            <person name="Nusbaum C."/>
            <person name="Mikkelsen T.S."/>
            <person name="Zody M.C."/>
            <person name="Asakawa S."/>
            <person name="Taudien S."/>
            <person name="Garber M."/>
            <person name="Kodira C.D."/>
            <person name="Schueler M.G."/>
            <person name="Shimizu A."/>
            <person name="Whittaker C.A."/>
            <person name="Chang J.L."/>
            <person name="Cuomo C.A."/>
            <person name="Dewar K."/>
            <person name="FitzGerald M.G."/>
            <person name="Yang X."/>
            <person name="Allen N.R."/>
            <person name="Anderson S."/>
            <person name="Asakawa T."/>
            <person name="Blechschmidt K."/>
            <person name="Bloom T."/>
            <person name="Borowsky M.L."/>
            <person name="Butler J."/>
            <person name="Cook A."/>
            <person name="Corum B."/>
            <person name="DeArellano K."/>
            <person name="DeCaprio D."/>
            <person name="Dooley K.T."/>
            <person name="Dorris L. III"/>
            <person name="Engels R."/>
            <person name="Gloeckner G."/>
            <person name="Hafez N."/>
            <person name="Hagopian D.S."/>
            <person name="Hall J.L."/>
            <person name="Ishikawa S.K."/>
            <person name="Jaffe D.B."/>
            <person name="Kamat A."/>
            <person name="Kudoh J."/>
            <person name="Lehmann R."/>
            <person name="Lokitsang T."/>
            <person name="Macdonald P."/>
            <person name="Major J.E."/>
            <person name="Matthews C.D."/>
            <person name="Mauceli E."/>
            <person name="Menzel U."/>
            <person name="Mihalev A.H."/>
            <person name="Minoshima S."/>
            <person name="Murayama Y."/>
            <person name="Naylor J.W."/>
            <person name="Nicol R."/>
            <person name="Nguyen C."/>
            <person name="O'Leary S.B."/>
            <person name="O'Neill K."/>
            <person name="Parker S.C.J."/>
            <person name="Polley A."/>
            <person name="Raymond C.K."/>
            <person name="Reichwald K."/>
            <person name="Rodriguez J."/>
            <person name="Sasaki T."/>
            <person name="Schilhabel M."/>
            <person name="Siddiqui R."/>
            <person name="Smith C.L."/>
            <person name="Sneddon T.P."/>
            <person name="Talamas J.A."/>
            <person name="Tenzin P."/>
            <person name="Topham K."/>
            <person name="Venkataraman V."/>
            <person name="Wen G."/>
            <person name="Yamazaki S."/>
            <person name="Young S.K."/>
            <person name="Zeng Q."/>
            <person name="Zimmer A.R."/>
            <person name="Rosenthal A."/>
            <person name="Birren B.W."/>
            <person name="Platzer M."/>
            <person name="Shimizu N."/>
            <person name="Lander E.S."/>
        </authorList>
    </citation>
    <scope>NUCLEOTIDE SEQUENCE [LARGE SCALE GENOMIC DNA]</scope>
</reference>
<reference key="3">
    <citation type="journal article" date="2004" name="Genome Res.">
        <title>The status, quality, and expansion of the NIH full-length cDNA project: the Mammalian Gene Collection (MGC).</title>
        <authorList>
            <consortium name="The MGC Project Team"/>
        </authorList>
    </citation>
    <scope>NUCLEOTIDE SEQUENCE [LARGE SCALE MRNA]</scope>
    <source>
        <tissue>PNS</tissue>
        <tissue>Skin</tissue>
    </source>
</reference>
<reference key="4">
    <citation type="journal article" date="2009" name="Anal. Chem.">
        <title>Lys-N and trypsin cover complementary parts of the phosphoproteome in a refined SCX-based approach.</title>
        <authorList>
            <person name="Gauci S."/>
            <person name="Helbig A.O."/>
            <person name="Slijper M."/>
            <person name="Krijgsveld J."/>
            <person name="Heck A.J."/>
            <person name="Mohammed S."/>
        </authorList>
    </citation>
    <scope>ACETYLATION [LARGE SCALE ANALYSIS] AT SER-2</scope>
    <scope>CLEAVAGE OF INITIATOR METHIONINE [LARGE SCALE ANALYSIS]</scope>
    <scope>IDENTIFICATION BY MASS SPECTROMETRY [LARGE SCALE ANALYSIS]</scope>
</reference>
<reference key="5">
    <citation type="journal article" date="2011" name="EMBO Mol. Med.">
        <title>ZNF703 gene amplification at 8p12 specifies luminal B breast cancer.</title>
        <authorList>
            <person name="Sircoulomb F."/>
            <person name="Nicolas N."/>
            <person name="Ferrari A."/>
            <person name="Finetti P."/>
            <person name="Bekhouche I."/>
            <person name="Rousselet E."/>
            <person name="Lonigro A."/>
            <person name="Adelaide J."/>
            <person name="Baudelet E."/>
            <person name="Esteyries S."/>
            <person name="Wicinski J."/>
            <person name="Audebert S."/>
            <person name="Charafe-Jauffret E."/>
            <person name="Jacquemier J."/>
            <person name="Lopez M."/>
            <person name="Borg J.P."/>
            <person name="Sotiriou C."/>
            <person name="Popovici C."/>
            <person name="Bertucci F."/>
            <person name="Birnbaum D."/>
            <person name="Chaffanet M."/>
            <person name="Ginestier C."/>
        </authorList>
    </citation>
    <scope>FUNCTION</scope>
    <scope>INVOLVEMENT IN LUMINAL B BREAST CANCER</scope>
    <scope>SUBCELLULAR LOCATION</scope>
    <scope>INTERACTION WITH DCAF7; HSPD1 AND PHB2</scope>
    <scope>INDUCTION BY 17-BETA-ESTRADIOL</scope>
</reference>
<reference key="6">
    <citation type="journal article" date="2011" name="EMBO Mol. Med.">
        <title>ZNF703 is a common Luminal B breast cancer oncogene that differentially regulates luminal and basal progenitors in human mammary epithelium.</title>
        <authorList>
            <person name="Holland D.G."/>
            <person name="Burleigh A."/>
            <person name="Git A."/>
            <person name="Goldgraben M.A."/>
            <person name="Perez-Mancera P.A."/>
            <person name="Chin S.F."/>
            <person name="Hurtado A."/>
            <person name="Bruna A."/>
            <person name="Ali H.R."/>
            <person name="Greenwood W."/>
            <person name="Dunning M.J."/>
            <person name="Samarajiwa S."/>
            <person name="Menon S."/>
            <person name="Rueda O.M."/>
            <person name="Lynch A.G."/>
            <person name="McKinney S."/>
            <person name="Ellis I.O."/>
            <person name="Eaves C.J."/>
            <person name="Carroll J.S."/>
            <person name="Curtis C."/>
            <person name="Aparicio S."/>
            <person name="Caldas C."/>
        </authorList>
    </citation>
    <scope>FUNCTION</scope>
    <scope>INVOLVEMENT IN LUMINAL B BREAST CANCER</scope>
    <scope>SUBCELLULAR LOCATION</scope>
</reference>
<reference key="7">
    <citation type="journal article" date="2011" name="Genes Dev.">
        <title>Zeppo1 is a novel metastasis promoter that represses E-cadherin expression and regulates p120-catenin isoform expression and localization.</title>
        <authorList>
            <person name="Slorach E.M."/>
            <person name="Chou J."/>
            <person name="Werb Z."/>
        </authorList>
    </citation>
    <scope>TISSUE SPECIFICITY</scope>
</reference>
<reference key="8">
    <citation type="journal article" date="2013" name="J. Proteome Res.">
        <title>Toward a comprehensive characterization of a human cancer cell phosphoproteome.</title>
        <authorList>
            <person name="Zhou H."/>
            <person name="Di Palma S."/>
            <person name="Preisinger C."/>
            <person name="Peng M."/>
            <person name="Polat A.N."/>
            <person name="Heck A.J."/>
            <person name="Mohammed S."/>
        </authorList>
    </citation>
    <scope>PHOSPHORYLATION [LARGE SCALE ANALYSIS] AT SER-252</scope>
    <scope>IDENTIFICATION BY MASS SPECTROMETRY [LARGE SCALE ANALYSIS]</scope>
    <source>
        <tissue>Cervix carcinoma</tissue>
    </source>
</reference>
<accession>Q9H7S9</accession>
<accession>Q5XG76</accession>
<evidence type="ECO:0000250" key="1"/>
<evidence type="ECO:0000250" key="2">
    <source>
        <dbReference type="UniProtKB" id="P0CL69"/>
    </source>
</evidence>
<evidence type="ECO:0000255" key="3">
    <source>
        <dbReference type="PROSITE-ProRule" id="PRU00042"/>
    </source>
</evidence>
<evidence type="ECO:0000256" key="4">
    <source>
        <dbReference type="SAM" id="MobiDB-lite"/>
    </source>
</evidence>
<evidence type="ECO:0000269" key="5">
    <source>
    </source>
</evidence>
<evidence type="ECO:0000269" key="6">
    <source>
    </source>
</evidence>
<evidence type="ECO:0000269" key="7">
    <source>
    </source>
</evidence>
<evidence type="ECO:0000305" key="8"/>
<evidence type="ECO:0007744" key="9">
    <source>
    </source>
</evidence>
<evidence type="ECO:0007744" key="10">
    <source>
    </source>
</evidence>
<comment type="function">
    <text evidence="6 7">Transcriptional corepressor which does not bind directly to DNA and may regulate transcription through recruitment of histone deacetylases to gene promoters. Regulates cell adhesion, migration and proliferation. May be required for segmental gene expression during hindbrain development.</text>
</comment>
<comment type="subunit">
    <text evidence="1 6">Interacts with TLE4; increases transcriptional repression (By similarity). Interacts with DCAF7 and PHB2. May interact with HSPD1.</text>
</comment>
<comment type="interaction">
    <interactant intactId="EBI-3957070">
        <id>Q9H7S9</id>
    </interactant>
    <interactant intactId="EBI-740785">
        <id>P49639</id>
        <label>HOXA1</label>
    </interactant>
    <organismsDiffer>false</organismsDiffer>
    <experiments>2</experiments>
</comment>
<comment type="subcellular location">
    <subcellularLocation>
        <location evidence="6 7">Nucleus</location>
    </subcellularLocation>
    <subcellularLocation>
        <location evidence="1">Cytoplasm</location>
    </subcellularLocation>
</comment>
<comment type="tissue specificity">
    <text evidence="5">Expressed in mammary epithelium.</text>
</comment>
<comment type="induction">
    <text evidence="6">Up-regulated by 17-beta-estradiol.</text>
</comment>
<comment type="disease">
    <text>Luminal B breast cancers are the clinically more aggressive estrogen receptor-positive tumors. Amplification of a distal 8p12 locus occurs in around one third of the cases and ZNF703 is the single gene within the minimal amplicon. Amplification of the gene correlates with its protein expression in tumor cells. ZNF703 is a classical breast cancer oncogene since it is able to transform non-malignant cells and increase cellular proliferation.</text>
</comment>
<comment type="similarity">
    <text evidence="8">Belongs to the Elbow/Noc family.</text>
</comment>
<comment type="sequence caution" evidence="8">
    <conflict type="miscellaneous discrepancy">
        <sequence resource="EMBL-CDS" id="AAH84581"/>
    </conflict>
    <text>Aberrant splicing.</text>
</comment>
<gene>
    <name type="primary">ZNF703</name>
    <name type="synonym">ZEPPO1</name>
    <name type="synonym">ZPO1</name>
</gene>
<organism>
    <name type="scientific">Homo sapiens</name>
    <name type="common">Human</name>
    <dbReference type="NCBI Taxonomy" id="9606"/>
    <lineage>
        <taxon>Eukaryota</taxon>
        <taxon>Metazoa</taxon>
        <taxon>Chordata</taxon>
        <taxon>Craniata</taxon>
        <taxon>Vertebrata</taxon>
        <taxon>Euteleostomi</taxon>
        <taxon>Mammalia</taxon>
        <taxon>Eutheria</taxon>
        <taxon>Euarchontoglires</taxon>
        <taxon>Primates</taxon>
        <taxon>Haplorrhini</taxon>
        <taxon>Catarrhini</taxon>
        <taxon>Hominidae</taxon>
        <taxon>Homo</taxon>
    </lineage>
</organism>
<keyword id="KW-0007">Acetylation</keyword>
<keyword id="KW-0963">Cytoplasm</keyword>
<keyword id="KW-0479">Metal-binding</keyword>
<keyword id="KW-0488">Methylation</keyword>
<keyword id="KW-0539">Nucleus</keyword>
<keyword id="KW-0597">Phosphoprotein</keyword>
<keyword id="KW-1267">Proteomics identification</keyword>
<keyword id="KW-1185">Reference proteome</keyword>
<keyword id="KW-0678">Repressor</keyword>
<keyword id="KW-0804">Transcription</keyword>
<keyword id="KW-0805">Transcription regulation</keyword>
<keyword id="KW-0862">Zinc</keyword>
<keyword id="KW-0863">Zinc-finger</keyword>
<feature type="initiator methionine" description="Removed" evidence="9">
    <location>
        <position position="1"/>
    </location>
</feature>
<feature type="chain" id="PRO_0000047702" description="Zinc finger protein 703">
    <location>
        <begin position="2"/>
        <end position="590"/>
    </location>
</feature>
<feature type="zinc finger region" description="C2H2-type" evidence="3">
    <location>
        <begin position="456"/>
        <end position="484"/>
    </location>
</feature>
<feature type="region of interest" description="Disordered" evidence="4">
    <location>
        <begin position="1"/>
        <end position="43"/>
    </location>
</feature>
<feature type="region of interest" description="Disordered" evidence="4">
    <location>
        <begin position="96"/>
        <end position="293"/>
    </location>
</feature>
<feature type="region of interest" description="Disordered" evidence="4">
    <location>
        <begin position="341"/>
        <end position="366"/>
    </location>
</feature>
<feature type="compositionally biased region" description="Polar residues" evidence="4">
    <location>
        <begin position="1"/>
        <end position="14"/>
    </location>
</feature>
<feature type="compositionally biased region" description="Low complexity" evidence="4">
    <location>
        <begin position="27"/>
        <end position="37"/>
    </location>
</feature>
<feature type="compositionally biased region" description="Low complexity" evidence="4">
    <location>
        <begin position="128"/>
        <end position="139"/>
    </location>
</feature>
<feature type="compositionally biased region" description="Low complexity" evidence="4">
    <location>
        <begin position="171"/>
        <end position="189"/>
    </location>
</feature>
<feature type="compositionally biased region" description="Low complexity" evidence="4">
    <location>
        <begin position="207"/>
        <end position="219"/>
    </location>
</feature>
<feature type="compositionally biased region" description="Basic and acidic residues" evidence="4">
    <location>
        <begin position="241"/>
        <end position="251"/>
    </location>
</feature>
<feature type="compositionally biased region" description="Gly residues" evidence="4">
    <location>
        <begin position="260"/>
        <end position="273"/>
    </location>
</feature>
<feature type="compositionally biased region" description="Gly residues" evidence="4">
    <location>
        <begin position="341"/>
        <end position="352"/>
    </location>
</feature>
<feature type="modified residue" description="N-acetylserine" evidence="9">
    <location>
        <position position="2"/>
    </location>
</feature>
<feature type="modified residue" description="Phosphoserine" evidence="10">
    <location>
        <position position="252"/>
    </location>
</feature>
<feature type="modified residue" description="Omega-N-methylarginine" evidence="2">
    <location>
        <position position="580"/>
    </location>
</feature>
<dbReference type="EMBL" id="AK024361">
    <property type="protein sequence ID" value="BAB14897.1"/>
    <property type="molecule type" value="mRNA"/>
</dbReference>
<dbReference type="EMBL" id="AC137579">
    <property type="status" value="NOT_ANNOTATED_CDS"/>
    <property type="molecule type" value="Genomic_DNA"/>
</dbReference>
<dbReference type="EMBL" id="BC032534">
    <property type="protein sequence ID" value="AAH32534.1"/>
    <property type="molecule type" value="mRNA"/>
</dbReference>
<dbReference type="EMBL" id="BC084581">
    <property type="protein sequence ID" value="AAH84581.1"/>
    <property type="status" value="ALT_SEQ"/>
    <property type="molecule type" value="mRNA"/>
</dbReference>
<dbReference type="CCDS" id="CCDS6094.1"/>
<dbReference type="RefSeq" id="NP_079345.1">
    <property type="nucleotide sequence ID" value="NM_025069.3"/>
</dbReference>
<dbReference type="BioGRID" id="123134">
    <property type="interactions" value="96"/>
</dbReference>
<dbReference type="FunCoup" id="Q9H7S9">
    <property type="interactions" value="1257"/>
</dbReference>
<dbReference type="IntAct" id="Q9H7S9">
    <property type="interactions" value="72"/>
</dbReference>
<dbReference type="MINT" id="Q9H7S9"/>
<dbReference type="STRING" id="9606.ENSP00000332325"/>
<dbReference type="GlyGen" id="Q9H7S9">
    <property type="glycosylation" value="6 sites, 1 O-linked glycan (6 sites)"/>
</dbReference>
<dbReference type="iPTMnet" id="Q9H7S9"/>
<dbReference type="PhosphoSitePlus" id="Q9H7S9"/>
<dbReference type="BioMuta" id="ZNF703"/>
<dbReference type="DMDM" id="74761508"/>
<dbReference type="jPOST" id="Q9H7S9"/>
<dbReference type="MassIVE" id="Q9H7S9"/>
<dbReference type="PaxDb" id="9606-ENSP00000332325"/>
<dbReference type="PeptideAtlas" id="Q9H7S9"/>
<dbReference type="ProteomicsDB" id="81143"/>
<dbReference type="Pumba" id="Q9H7S9"/>
<dbReference type="Antibodypedia" id="10770">
    <property type="antibodies" value="295 antibodies from 31 providers"/>
</dbReference>
<dbReference type="DNASU" id="80139"/>
<dbReference type="Ensembl" id="ENST00000331569.6">
    <property type="protein sequence ID" value="ENSP00000332325.4"/>
    <property type="gene ID" value="ENSG00000183779.7"/>
</dbReference>
<dbReference type="GeneID" id="80139"/>
<dbReference type="KEGG" id="hsa:80139"/>
<dbReference type="MANE-Select" id="ENST00000331569.6">
    <property type="protein sequence ID" value="ENSP00000332325.4"/>
    <property type="RefSeq nucleotide sequence ID" value="NM_025069.3"/>
    <property type="RefSeq protein sequence ID" value="NP_079345.1"/>
</dbReference>
<dbReference type="UCSC" id="uc003xjy.2">
    <property type="organism name" value="human"/>
</dbReference>
<dbReference type="AGR" id="HGNC:25883"/>
<dbReference type="CTD" id="80139"/>
<dbReference type="DisGeNET" id="80139"/>
<dbReference type="GeneCards" id="ZNF703"/>
<dbReference type="HGNC" id="HGNC:25883">
    <property type="gene designation" value="ZNF703"/>
</dbReference>
<dbReference type="HPA" id="ENSG00000183779">
    <property type="expression patterns" value="Tissue enhanced (skeletal)"/>
</dbReference>
<dbReference type="MalaCards" id="ZNF703"/>
<dbReference type="neXtProt" id="NX_Q9H7S9"/>
<dbReference type="OpenTargets" id="ENSG00000183779"/>
<dbReference type="PharmGKB" id="PA142670500"/>
<dbReference type="VEuPathDB" id="HostDB:ENSG00000183779"/>
<dbReference type="eggNOG" id="ENOG502QV57">
    <property type="taxonomic scope" value="Eukaryota"/>
</dbReference>
<dbReference type="GeneTree" id="ENSGT00390000014618"/>
<dbReference type="HOGENOM" id="CLU_035082_1_0_1"/>
<dbReference type="InParanoid" id="Q9H7S9"/>
<dbReference type="OMA" id="SQAPHMD"/>
<dbReference type="OrthoDB" id="10054079at2759"/>
<dbReference type="PAN-GO" id="Q9H7S9">
    <property type="GO annotations" value="2 GO annotations based on evolutionary models"/>
</dbReference>
<dbReference type="PhylomeDB" id="Q9H7S9"/>
<dbReference type="TreeFam" id="TF324968"/>
<dbReference type="PathwayCommons" id="Q9H7S9"/>
<dbReference type="Reactome" id="R-HSA-212436">
    <property type="pathway name" value="Generic Transcription Pathway"/>
</dbReference>
<dbReference type="SignaLink" id="Q9H7S9"/>
<dbReference type="BioGRID-ORCS" id="80139">
    <property type="hits" value="11 hits in 1182 CRISPR screens"/>
</dbReference>
<dbReference type="ChiTaRS" id="ZNF703">
    <property type="organism name" value="human"/>
</dbReference>
<dbReference type="GenomeRNAi" id="80139"/>
<dbReference type="Pharos" id="Q9H7S9">
    <property type="development level" value="Tbio"/>
</dbReference>
<dbReference type="PRO" id="PR:Q9H7S9"/>
<dbReference type="Proteomes" id="UP000005640">
    <property type="component" value="Chromosome 8"/>
</dbReference>
<dbReference type="RNAct" id="Q9H7S9">
    <property type="molecule type" value="protein"/>
</dbReference>
<dbReference type="Bgee" id="ENSG00000183779">
    <property type="expression patterns" value="Expressed in upper arm skin and 173 other cell types or tissues"/>
</dbReference>
<dbReference type="GO" id="GO:0005737">
    <property type="term" value="C:cytoplasm"/>
    <property type="evidence" value="ECO:0000314"/>
    <property type="project" value="UniProtKB"/>
</dbReference>
<dbReference type="GO" id="GO:0005739">
    <property type="term" value="C:mitochondrion"/>
    <property type="evidence" value="ECO:0006056"/>
    <property type="project" value="FlyBase"/>
</dbReference>
<dbReference type="GO" id="GO:0016363">
    <property type="term" value="C:nuclear matrix"/>
    <property type="evidence" value="ECO:0000314"/>
    <property type="project" value="UniProtKB"/>
</dbReference>
<dbReference type="GO" id="GO:0005634">
    <property type="term" value="C:nucleus"/>
    <property type="evidence" value="ECO:0000314"/>
    <property type="project" value="UniProtKB"/>
</dbReference>
<dbReference type="GO" id="GO:0032991">
    <property type="term" value="C:protein-containing complex"/>
    <property type="evidence" value="ECO:0000314"/>
    <property type="project" value="UniProtKB"/>
</dbReference>
<dbReference type="GO" id="GO:0140297">
    <property type="term" value="F:DNA-binding transcription factor binding"/>
    <property type="evidence" value="ECO:0007669"/>
    <property type="project" value="Ensembl"/>
</dbReference>
<dbReference type="GO" id="GO:0008270">
    <property type="term" value="F:zinc ion binding"/>
    <property type="evidence" value="ECO:0007669"/>
    <property type="project" value="UniProtKB-KW"/>
</dbReference>
<dbReference type="GO" id="GO:0034333">
    <property type="term" value="P:adherens junction assembly"/>
    <property type="evidence" value="ECO:0000250"/>
    <property type="project" value="UniProtKB"/>
</dbReference>
<dbReference type="GO" id="GO:0071392">
    <property type="term" value="P:cellular response to estradiol stimulus"/>
    <property type="evidence" value="ECO:0000314"/>
    <property type="project" value="UniProtKB"/>
</dbReference>
<dbReference type="GO" id="GO:0060644">
    <property type="term" value="P:mammary gland epithelial cell differentiation"/>
    <property type="evidence" value="ECO:0000314"/>
    <property type="project" value="UniProtKB"/>
</dbReference>
<dbReference type="GO" id="GO:0045892">
    <property type="term" value="P:negative regulation of DNA-templated transcription"/>
    <property type="evidence" value="ECO:0000315"/>
    <property type="project" value="UniProtKB"/>
</dbReference>
<dbReference type="GO" id="GO:0034111">
    <property type="term" value="P:negative regulation of homotypic cell-cell adhesion"/>
    <property type="evidence" value="ECO:0000250"/>
    <property type="project" value="UniProtKB"/>
</dbReference>
<dbReference type="GO" id="GO:0030335">
    <property type="term" value="P:positive regulation of cell migration"/>
    <property type="evidence" value="ECO:0000250"/>
    <property type="project" value="UniProtKB"/>
</dbReference>
<dbReference type="GO" id="GO:0008284">
    <property type="term" value="P:positive regulation of cell population proliferation"/>
    <property type="evidence" value="ECO:0000314"/>
    <property type="project" value="UniProtKB"/>
</dbReference>
<dbReference type="GO" id="GO:0010718">
    <property type="term" value="P:positive regulation of epithelial to mesenchymal transition"/>
    <property type="evidence" value="ECO:0000250"/>
    <property type="project" value="UniProtKB"/>
</dbReference>
<dbReference type="GO" id="GO:0033601">
    <property type="term" value="P:positive regulation of mammary gland epithelial cell proliferation"/>
    <property type="evidence" value="ECO:0000314"/>
    <property type="project" value="UniProtKB"/>
</dbReference>
<dbReference type="GO" id="GO:0060828">
    <property type="term" value="P:regulation of canonical Wnt signaling pathway"/>
    <property type="evidence" value="ECO:0000250"/>
    <property type="project" value="UniProtKB"/>
</dbReference>
<dbReference type="GO" id="GO:0051726">
    <property type="term" value="P:regulation of cell cycle"/>
    <property type="evidence" value="ECO:0000314"/>
    <property type="project" value="UniProtKB"/>
</dbReference>
<dbReference type="GO" id="GO:0006355">
    <property type="term" value="P:regulation of DNA-templated transcription"/>
    <property type="evidence" value="ECO:0000314"/>
    <property type="project" value="UniProtKB"/>
</dbReference>
<dbReference type="GO" id="GO:0017015">
    <property type="term" value="P:regulation of transforming growth factor beta receptor signaling pathway"/>
    <property type="evidence" value="ECO:0000314"/>
    <property type="project" value="UniProtKB"/>
</dbReference>
<dbReference type="FunFam" id="3.30.160.60:FF:000129">
    <property type="entry name" value="Zinc finger protein 503"/>
    <property type="match status" value="1"/>
</dbReference>
<dbReference type="Gene3D" id="3.30.160.60">
    <property type="entry name" value="Classic Zinc Finger"/>
    <property type="match status" value="1"/>
</dbReference>
<dbReference type="InterPro" id="IPR051520">
    <property type="entry name" value="Elbow/Noc_ZnFinger"/>
</dbReference>
<dbReference type="InterPro" id="IPR022129">
    <property type="entry name" value="Tscrpt_rep_NocA-like"/>
</dbReference>
<dbReference type="InterPro" id="IPR013087">
    <property type="entry name" value="Znf_C2H2_type"/>
</dbReference>
<dbReference type="PANTHER" id="PTHR12522:SF2">
    <property type="entry name" value="ZINC FINGER PROTEIN 703"/>
    <property type="match status" value="1"/>
</dbReference>
<dbReference type="PANTHER" id="PTHR12522">
    <property type="entry name" value="ZINC-FINGER PROTEIN NOLZ1-RELATED"/>
    <property type="match status" value="1"/>
</dbReference>
<dbReference type="Pfam" id="PF12402">
    <property type="entry name" value="nlz1"/>
    <property type="match status" value="1"/>
</dbReference>
<dbReference type="PROSITE" id="PS50157">
    <property type="entry name" value="ZINC_FINGER_C2H2_2"/>
    <property type="match status" value="1"/>
</dbReference>
<sequence>MSDSPAGSNPRTPESSGSGSGGGGKRPAVPAAVSLLPPADPLRQANRLPIRVLKMLSAHTGHLLHPEYLQPLSSTPVSPIELDAKKSPLALLAQTCSQIGKPDPPPSSKLNSVAAAANGLGAEKDPGRSAPGAASAAAALKQLGDSPAEDKSSFKPYSKGSGGGDSRKDSGSSSVSSTSSSSSSSPGDKAGFRVPSAACPPFPPHGAPVSASSSSSSPGGSRGGSPHHSDCKNGGGVGGGELDKKDQEPKPSPEPAAVSRGGGGEPGAHGGAESGASGRKSEPPSALVGAGHVAPVSPYKPGHSVFPLPPSSIGYHGSIVGAYAGYPSQFVPGLDPSKSGLVGGQLSGGLGLPPGKPPSSSPLTGASPPSFLQGLCRDPYCLGGYHGASHLGGSSCSTCSAHDPAGPSLKAGGYPLVYPGHPLQPAALSSSAAQAALPGHPLYTYGFMLQNEPLPHSCNWVAASGPCDKRFATSEELLSHLRTHTALPGAEKLLAAYPGASGLGSAAAAAAAAASCHLHLPPPAAPGSPGSLSLRNPHTLGLSRYHPYGKSHLSTAGGLAVPSLPTAGPYYSPYALYGQRLASASALGYQ</sequence>
<name>ZN703_HUMAN</name>
<protein>
    <recommendedName>
        <fullName>Zinc finger protein 703</fullName>
    </recommendedName>
    <alternativeName>
        <fullName>Zinc finger elbow-related proline domain protein 1</fullName>
    </alternativeName>
</protein>